<sequence length="360" mass="39099">MLLFLADLLAHFQSAFNVFNYLTLRVILGTLTALMLCLWLGPQVIRRLVERQIGQAVRDDGPQSHLSKAGTPTMGGAMILIAIAVSTLLWGDLTNHYVWLVLAVTLGFGAIGWVDDYRKVVEKNPRGLPARWKYFWQSAIGLGAAVTLYLTAASPVEVSLIVPLFKDVVVPLGLFYIVLTYFVIVGSSNAVNLTDGLDGLAIMPTVLVAMGLAIFAYASGNTVFAQYLHIPLVPGAGELAVFCGTIAGAGLGFLWFNTYPAQVFMGDVGALALGAALGVVAVIVRQEIVLFIMGGVFVMETVSVMLQVGSYKLTGRRIFRMAPLHHHFELKGWPEPRVIVRFWIITVVLVLLGLATLKIR</sequence>
<name>MRAY_CHRSD</name>
<accession>Q1QVG4</accession>
<evidence type="ECO:0000255" key="1">
    <source>
        <dbReference type="HAMAP-Rule" id="MF_00038"/>
    </source>
</evidence>
<keyword id="KW-0131">Cell cycle</keyword>
<keyword id="KW-0132">Cell division</keyword>
<keyword id="KW-0997">Cell inner membrane</keyword>
<keyword id="KW-1003">Cell membrane</keyword>
<keyword id="KW-0133">Cell shape</keyword>
<keyword id="KW-0961">Cell wall biogenesis/degradation</keyword>
<keyword id="KW-0460">Magnesium</keyword>
<keyword id="KW-0472">Membrane</keyword>
<keyword id="KW-0479">Metal-binding</keyword>
<keyword id="KW-0573">Peptidoglycan synthesis</keyword>
<keyword id="KW-1185">Reference proteome</keyword>
<keyword id="KW-0808">Transferase</keyword>
<keyword id="KW-0812">Transmembrane</keyword>
<keyword id="KW-1133">Transmembrane helix</keyword>
<dbReference type="EC" id="2.7.8.13" evidence="1"/>
<dbReference type="EMBL" id="CP000285">
    <property type="protein sequence ID" value="ABE59544.1"/>
    <property type="molecule type" value="Genomic_DNA"/>
</dbReference>
<dbReference type="RefSeq" id="WP_011507490.1">
    <property type="nucleotide sequence ID" value="NC_007963.1"/>
</dbReference>
<dbReference type="SMR" id="Q1QVG4"/>
<dbReference type="STRING" id="290398.Csal_2193"/>
<dbReference type="GeneID" id="95334911"/>
<dbReference type="KEGG" id="csa:Csal_2193"/>
<dbReference type="eggNOG" id="COG0472">
    <property type="taxonomic scope" value="Bacteria"/>
</dbReference>
<dbReference type="HOGENOM" id="CLU_023982_0_0_6"/>
<dbReference type="OrthoDB" id="9805475at2"/>
<dbReference type="UniPathway" id="UPA00219"/>
<dbReference type="Proteomes" id="UP000000239">
    <property type="component" value="Chromosome"/>
</dbReference>
<dbReference type="GO" id="GO:0005886">
    <property type="term" value="C:plasma membrane"/>
    <property type="evidence" value="ECO:0007669"/>
    <property type="project" value="UniProtKB-SubCell"/>
</dbReference>
<dbReference type="GO" id="GO:0046872">
    <property type="term" value="F:metal ion binding"/>
    <property type="evidence" value="ECO:0007669"/>
    <property type="project" value="UniProtKB-KW"/>
</dbReference>
<dbReference type="GO" id="GO:0008963">
    <property type="term" value="F:phospho-N-acetylmuramoyl-pentapeptide-transferase activity"/>
    <property type="evidence" value="ECO:0007669"/>
    <property type="project" value="UniProtKB-UniRule"/>
</dbReference>
<dbReference type="GO" id="GO:0051992">
    <property type="term" value="F:UDP-N-acetylmuramoyl-L-alanyl-D-glutamyl-meso-2,6-diaminopimelyl-D-alanyl-D-alanine:undecaprenyl-phosphate transferase activity"/>
    <property type="evidence" value="ECO:0007669"/>
    <property type="project" value="RHEA"/>
</dbReference>
<dbReference type="GO" id="GO:0051301">
    <property type="term" value="P:cell division"/>
    <property type="evidence" value="ECO:0007669"/>
    <property type="project" value="UniProtKB-KW"/>
</dbReference>
<dbReference type="GO" id="GO:0071555">
    <property type="term" value="P:cell wall organization"/>
    <property type="evidence" value="ECO:0007669"/>
    <property type="project" value="UniProtKB-KW"/>
</dbReference>
<dbReference type="GO" id="GO:0009252">
    <property type="term" value="P:peptidoglycan biosynthetic process"/>
    <property type="evidence" value="ECO:0007669"/>
    <property type="project" value="UniProtKB-UniRule"/>
</dbReference>
<dbReference type="GO" id="GO:0008360">
    <property type="term" value="P:regulation of cell shape"/>
    <property type="evidence" value="ECO:0007669"/>
    <property type="project" value="UniProtKB-KW"/>
</dbReference>
<dbReference type="CDD" id="cd06852">
    <property type="entry name" value="GT_MraY"/>
    <property type="match status" value="1"/>
</dbReference>
<dbReference type="HAMAP" id="MF_00038">
    <property type="entry name" value="MraY"/>
    <property type="match status" value="1"/>
</dbReference>
<dbReference type="InterPro" id="IPR000715">
    <property type="entry name" value="Glycosyl_transferase_4"/>
</dbReference>
<dbReference type="InterPro" id="IPR003524">
    <property type="entry name" value="PNAcMuramoyl-5peptid_Trfase"/>
</dbReference>
<dbReference type="InterPro" id="IPR018480">
    <property type="entry name" value="PNAcMuramoyl-5peptid_Trfase_CS"/>
</dbReference>
<dbReference type="NCBIfam" id="TIGR00445">
    <property type="entry name" value="mraY"/>
    <property type="match status" value="1"/>
</dbReference>
<dbReference type="PANTHER" id="PTHR22926">
    <property type="entry name" value="PHOSPHO-N-ACETYLMURAMOYL-PENTAPEPTIDE-TRANSFERASE"/>
    <property type="match status" value="1"/>
</dbReference>
<dbReference type="PANTHER" id="PTHR22926:SF5">
    <property type="entry name" value="PHOSPHO-N-ACETYLMURAMOYL-PENTAPEPTIDE-TRANSFERASE HOMOLOG"/>
    <property type="match status" value="1"/>
</dbReference>
<dbReference type="Pfam" id="PF00953">
    <property type="entry name" value="Glycos_transf_4"/>
    <property type="match status" value="1"/>
</dbReference>
<dbReference type="PROSITE" id="PS01347">
    <property type="entry name" value="MRAY_1"/>
    <property type="match status" value="1"/>
</dbReference>
<dbReference type="PROSITE" id="PS01348">
    <property type="entry name" value="MRAY_2"/>
    <property type="match status" value="1"/>
</dbReference>
<gene>
    <name evidence="1" type="primary">mraY</name>
    <name type="ordered locus">Csal_2193</name>
</gene>
<protein>
    <recommendedName>
        <fullName evidence="1">Phospho-N-acetylmuramoyl-pentapeptide-transferase</fullName>
        <ecNumber evidence="1">2.7.8.13</ecNumber>
    </recommendedName>
    <alternativeName>
        <fullName evidence="1">UDP-MurNAc-pentapeptide phosphotransferase</fullName>
    </alternativeName>
</protein>
<comment type="function">
    <text evidence="1">Catalyzes the initial step of the lipid cycle reactions in the biosynthesis of the cell wall peptidoglycan: transfers peptidoglycan precursor phospho-MurNAc-pentapeptide from UDP-MurNAc-pentapeptide onto the lipid carrier undecaprenyl phosphate, yielding undecaprenyl-pyrophosphoryl-MurNAc-pentapeptide, known as lipid I.</text>
</comment>
<comment type="catalytic activity">
    <reaction evidence="1">
        <text>UDP-N-acetyl-alpha-D-muramoyl-L-alanyl-gamma-D-glutamyl-meso-2,6-diaminopimeloyl-D-alanyl-D-alanine + di-trans,octa-cis-undecaprenyl phosphate = di-trans,octa-cis-undecaprenyl diphospho-N-acetyl-alpha-D-muramoyl-L-alanyl-D-glutamyl-meso-2,6-diaminopimeloyl-D-alanyl-D-alanine + UMP</text>
        <dbReference type="Rhea" id="RHEA:28386"/>
        <dbReference type="ChEBI" id="CHEBI:57865"/>
        <dbReference type="ChEBI" id="CHEBI:60392"/>
        <dbReference type="ChEBI" id="CHEBI:61386"/>
        <dbReference type="ChEBI" id="CHEBI:61387"/>
        <dbReference type="EC" id="2.7.8.13"/>
    </reaction>
</comment>
<comment type="cofactor">
    <cofactor evidence="1">
        <name>Mg(2+)</name>
        <dbReference type="ChEBI" id="CHEBI:18420"/>
    </cofactor>
</comment>
<comment type="pathway">
    <text evidence="1">Cell wall biogenesis; peptidoglycan biosynthesis.</text>
</comment>
<comment type="subcellular location">
    <subcellularLocation>
        <location evidence="1">Cell inner membrane</location>
        <topology evidence="1">Multi-pass membrane protein</topology>
    </subcellularLocation>
</comment>
<comment type="similarity">
    <text evidence="1">Belongs to the glycosyltransferase 4 family. MraY subfamily.</text>
</comment>
<organism>
    <name type="scientific">Chromohalobacter salexigens (strain ATCC BAA-138 / DSM 3043 / CIP 106854 / NCIMB 13768 / 1H11)</name>
    <dbReference type="NCBI Taxonomy" id="290398"/>
    <lineage>
        <taxon>Bacteria</taxon>
        <taxon>Pseudomonadati</taxon>
        <taxon>Pseudomonadota</taxon>
        <taxon>Gammaproteobacteria</taxon>
        <taxon>Oceanospirillales</taxon>
        <taxon>Halomonadaceae</taxon>
        <taxon>Chromohalobacter</taxon>
    </lineage>
</organism>
<proteinExistence type="inferred from homology"/>
<feature type="chain" id="PRO_1000002960" description="Phospho-N-acetylmuramoyl-pentapeptide-transferase">
    <location>
        <begin position="1"/>
        <end position="360"/>
    </location>
</feature>
<feature type="transmembrane region" description="Helical" evidence="1">
    <location>
        <begin position="21"/>
        <end position="41"/>
    </location>
</feature>
<feature type="transmembrane region" description="Helical" evidence="1">
    <location>
        <begin position="73"/>
        <end position="93"/>
    </location>
</feature>
<feature type="transmembrane region" description="Helical" evidence="1">
    <location>
        <begin position="94"/>
        <end position="114"/>
    </location>
</feature>
<feature type="transmembrane region" description="Helical" evidence="1">
    <location>
        <begin position="145"/>
        <end position="165"/>
    </location>
</feature>
<feature type="transmembrane region" description="Helical" evidence="1">
    <location>
        <begin position="168"/>
        <end position="188"/>
    </location>
</feature>
<feature type="transmembrane region" description="Helical" evidence="1">
    <location>
        <begin position="199"/>
        <end position="219"/>
    </location>
</feature>
<feature type="transmembrane region" description="Helical" evidence="1">
    <location>
        <begin position="236"/>
        <end position="256"/>
    </location>
</feature>
<feature type="transmembrane region" description="Helical" evidence="1">
    <location>
        <begin position="263"/>
        <end position="283"/>
    </location>
</feature>
<feature type="transmembrane region" description="Helical" evidence="1">
    <location>
        <begin position="288"/>
        <end position="308"/>
    </location>
</feature>
<feature type="transmembrane region" description="Helical" evidence="1">
    <location>
        <begin position="339"/>
        <end position="359"/>
    </location>
</feature>
<reference key="1">
    <citation type="journal article" date="2011" name="Stand. Genomic Sci.">
        <title>Complete genome sequence of the halophilic and highly halotolerant Chromohalobacter salexigens type strain (1H11(T)).</title>
        <authorList>
            <person name="Copeland A."/>
            <person name="O'Connor K."/>
            <person name="Lucas S."/>
            <person name="Lapidus A."/>
            <person name="Berry K.W."/>
            <person name="Detter J.C."/>
            <person name="Del Rio T.G."/>
            <person name="Hammon N."/>
            <person name="Dalin E."/>
            <person name="Tice H."/>
            <person name="Pitluck S."/>
            <person name="Bruce D."/>
            <person name="Goodwin L."/>
            <person name="Han C."/>
            <person name="Tapia R."/>
            <person name="Saunders E."/>
            <person name="Schmutz J."/>
            <person name="Brettin T."/>
            <person name="Larimer F."/>
            <person name="Land M."/>
            <person name="Hauser L."/>
            <person name="Vargas C."/>
            <person name="Nieto J.J."/>
            <person name="Kyrpides N.C."/>
            <person name="Ivanova N."/>
            <person name="Goker M."/>
            <person name="Klenk H.P."/>
            <person name="Csonka L.N."/>
            <person name="Woyke T."/>
        </authorList>
    </citation>
    <scope>NUCLEOTIDE SEQUENCE [LARGE SCALE GENOMIC DNA]</scope>
    <source>
        <strain>ATCC BAA-138 / DSM 3043 / CIP 106854 / NCIMB 13768 / 1H11</strain>
    </source>
</reference>